<comment type="function">
    <text evidence="3">Component of the CENPA-CAD (nucleosome distal) complex, a complex recruited to centromeres which is involved in assembly of kinetochore proteins, mitotic progression and chromosome segregation. May be involved in incorporation of newly synthesized CENPA into centromeres via its interaction with the CENPA-NAC complex.</text>
</comment>
<comment type="subunit">
    <text evidence="2 3">Component of the CENPA-CAD complex, composed of CENPI, CENPK, CENPL, CENPO, CENPP, CENPQ, CENPR and CENPS. The CENPA-CAD complex interacts with the CENPA-NAC complex, at least composed of CENPA, CENPC, CENPH, CENPM, CENPN, CENPT and CENPU.</text>
</comment>
<comment type="interaction">
    <interactant intactId="EBI-10250303">
        <id>Q6IPU0</id>
    </interactant>
    <interactant intactId="EBI-3923949">
        <id>Q8N8Y2</id>
        <label>ATP6V0D2</label>
    </interactant>
    <organismsDiffer>false</organismsDiffer>
    <experiments>3</experiments>
</comment>
<comment type="interaction">
    <interactant intactId="EBI-10250303">
        <id>Q6IPU0</id>
    </interactant>
    <interactant intactId="EBI-1642333">
        <id>Q9BYV9</id>
        <label>BACH2</label>
    </interactant>
    <organismsDiffer>false</organismsDiffer>
    <experiments>3</experiments>
</comment>
<comment type="interaction">
    <interactant intactId="EBI-10250303">
        <id>Q6IPU0</id>
    </interactant>
    <interactant intactId="EBI-744298">
        <id>Q9BSF0</id>
        <label>C2orf88</label>
    </interactant>
    <organismsDiffer>false</organismsDiffer>
    <experiments>3</experiments>
</comment>
<comment type="interaction">
    <interactant intactId="EBI-10250303">
        <id>Q6IPU0</id>
    </interactant>
    <interactant intactId="EBI-739674">
        <id>Q15834</id>
        <label>CCDC85B</label>
    </interactant>
    <organismsDiffer>false</organismsDiffer>
    <experiments>3</experiments>
</comment>
<comment type="interaction">
    <interactant intactId="EBI-10250303">
        <id>Q6IPU0</id>
    </interactant>
    <interactant intactId="EBI-745954">
        <id>Q9BU64</id>
        <label>CENPO</label>
    </interactant>
    <organismsDiffer>false</organismsDiffer>
    <experiments>13</experiments>
</comment>
<comment type="interaction">
    <interactant intactId="EBI-10250303">
        <id>Q6IPU0</id>
    </interactant>
    <interactant intactId="EBI-744115">
        <id>Q9C0F1</id>
        <label>CEP44</label>
    </interactant>
    <organismsDiffer>false</organismsDiffer>
    <experiments>5</experiments>
</comment>
<comment type="interaction">
    <interactant intactId="EBI-10250303">
        <id>Q6IPU0</id>
    </interactant>
    <interactant intactId="EBI-618309">
        <id>Q08379</id>
        <label>GOLGA2</label>
    </interactant>
    <organismsDiffer>false</organismsDiffer>
    <experiments>3</experiments>
</comment>
<comment type="interaction">
    <interactant intactId="EBI-10250303">
        <id>Q6IPU0</id>
    </interactant>
    <interactant intactId="EBI-2514791">
        <id>Q96CS2</id>
        <label>HAUS1</label>
    </interactant>
    <organismsDiffer>false</organismsDiffer>
    <experiments>5</experiments>
</comment>
<comment type="interaction">
    <interactant intactId="EBI-10250303">
        <id>Q6IPU0</id>
    </interactant>
    <interactant intactId="EBI-3437878">
        <id>Q86T90</id>
        <label>KIAA1328</label>
    </interactant>
    <organismsDiffer>false</organismsDiffer>
    <experiments>3</experiments>
</comment>
<comment type="interaction">
    <interactant intactId="EBI-10250303">
        <id>Q6IPU0</id>
    </interactant>
    <interactant intactId="EBI-1643885">
        <id>Q6P597</id>
        <label>KLC3</label>
    </interactant>
    <organismsDiffer>false</organismsDiffer>
    <experiments>3</experiments>
</comment>
<comment type="interaction">
    <interactant intactId="EBI-10250303">
        <id>Q6IPU0</id>
    </interactant>
    <interactant intactId="EBI-11978579">
        <id>O95983-2</id>
        <label>MBD3</label>
    </interactant>
    <organismsDiffer>false</organismsDiffer>
    <experiments>3</experiments>
</comment>
<comment type="interaction">
    <interactant intactId="EBI-10250303">
        <id>Q6IPU0</id>
    </interactant>
    <interactant intactId="EBI-3930567">
        <id>Q02575</id>
        <label>NHLH1</label>
    </interactant>
    <organismsDiffer>false</organismsDiffer>
    <experiments>3</experiments>
</comment>
<comment type="interaction">
    <interactant intactId="EBI-10250303">
        <id>Q6IPU0</id>
    </interactant>
    <interactant intactId="EBI-10197511">
        <id>Q5T203</id>
        <label>NHLH1</label>
    </interactant>
    <organismsDiffer>false</organismsDiffer>
    <experiments>3</experiments>
</comment>
<comment type="interaction">
    <interactant intactId="EBI-10250303">
        <id>Q6IPU0</id>
    </interactant>
    <interactant intactId="EBI-741158">
        <id>Q96HA8</id>
        <label>NTAQ1</label>
    </interactant>
    <organismsDiffer>false</organismsDiffer>
    <experiments>3</experiments>
</comment>
<comment type="interaction">
    <interactant intactId="EBI-10250303">
        <id>Q6IPU0</id>
    </interactant>
    <interactant intactId="EBI-2692890">
        <id>Q96KN3</id>
        <label>PKNOX2</label>
    </interactant>
    <organismsDiffer>false</organismsDiffer>
    <experiments>3</experiments>
</comment>
<comment type="interaction">
    <interactant intactId="EBI-10250303">
        <id>Q6IPU0</id>
    </interactant>
    <interactant intactId="EBI-11023785">
        <id>Q9Y2Y1</id>
        <label>POLR3K</label>
    </interactant>
    <organismsDiffer>false</organismsDiffer>
    <experiments>3</experiments>
</comment>
<comment type="interaction">
    <interactant intactId="EBI-10250303">
        <id>Q6IPU0</id>
    </interactant>
    <interactant intactId="EBI-744831">
        <id>P49247</id>
        <label>RPIA</label>
    </interactant>
    <organismsDiffer>false</organismsDiffer>
    <experiments>8</experiments>
</comment>
<comment type="interaction">
    <interactant intactId="EBI-10250303">
        <id>Q6IPU0</id>
    </interactant>
    <interactant intactId="EBI-748621">
        <id>Q9UJW9</id>
        <label>SERTAD3</label>
    </interactant>
    <organismsDiffer>false</organismsDiffer>
    <experiments>3</experiments>
</comment>
<comment type="interaction">
    <interactant intactId="EBI-10250303">
        <id>Q6IPU0</id>
    </interactant>
    <interactant intactId="EBI-960169">
        <id>P61764</id>
        <label>STXBP1</label>
    </interactant>
    <organismsDiffer>false</organismsDiffer>
    <experiments>3</experiments>
</comment>
<comment type="interaction">
    <interactant intactId="EBI-10250303">
        <id>Q6IPU0</id>
    </interactant>
    <interactant intactId="EBI-742397">
        <id>Q8IYF3</id>
        <label>TEX11</label>
    </interactant>
    <organismsDiffer>false</organismsDiffer>
    <experiments>3</experiments>
</comment>
<comment type="interaction">
    <interactant intactId="EBI-10250303">
        <id>Q6IPU0</id>
    </interactant>
    <interactant intactId="EBI-12815137">
        <id>Q96NM4-3</id>
        <label>TOX2</label>
    </interactant>
    <organismsDiffer>false</organismsDiffer>
    <experiments>3</experiments>
</comment>
<comment type="interaction">
    <interactant intactId="EBI-10250303">
        <id>Q6IPU0</id>
    </interactant>
    <interactant intactId="EBI-739895">
        <id>Q8N6Y0</id>
        <label>USHBP1</label>
    </interactant>
    <organismsDiffer>false</organismsDiffer>
    <experiments>6</experiments>
</comment>
<comment type="interaction">
    <interactant intactId="EBI-10250303">
        <id>Q6IPU0</id>
    </interactant>
    <interactant intactId="EBI-9089622">
        <id>Q9BYN7</id>
        <label>ZNF341</label>
    </interactant>
    <organismsDiffer>false</organismsDiffer>
    <experiments>3</experiments>
</comment>
<comment type="interaction">
    <interactant intactId="EBI-10250303">
        <id>Q6IPU0</id>
    </interactant>
    <interactant intactId="EBI-12834294">
        <id>Q7L2R6-2</id>
        <label>ZNF765</label>
    </interactant>
    <organismsDiffer>false</organismsDiffer>
    <experiments>3</experiments>
</comment>
<comment type="subcellular location">
    <subcellularLocation>
        <location evidence="3">Nucleus</location>
    </subcellularLocation>
    <subcellularLocation>
        <location evidence="3">Chromosome</location>
        <location evidence="3">Centromere</location>
    </subcellularLocation>
    <text>Localizes exclusively in the centromeres. The CENPA-CAD complex is probably recruited on centromeres by the CENPA-NAC complex.</text>
</comment>
<comment type="alternative products">
    <event type="alternative splicing"/>
    <isoform>
        <id>Q6IPU0-1</id>
        <name>1</name>
        <sequence type="displayed"/>
    </isoform>
    <isoform>
        <id>Q6IPU0-2</id>
        <name>2</name>
        <sequence type="described" ref="VSP_055368 VSP_055369"/>
    </isoform>
</comment>
<comment type="similarity">
    <text evidence="5">Belongs to the CENP-P/CTF19 family.</text>
</comment>
<name>CENPP_HUMAN</name>
<feature type="chain" id="PRO_0000249506" description="Centromere protein P">
    <location>
        <begin position="1"/>
        <end position="288"/>
    </location>
</feature>
<feature type="coiled-coil region" evidence="1">
    <location>
        <begin position="1"/>
        <end position="71"/>
    </location>
</feature>
<feature type="modified residue" description="Phosphoserine" evidence="6">
    <location>
        <position position="38"/>
    </location>
</feature>
<feature type="splice variant" id="VSP_055368" description="In isoform 2." evidence="4">
    <original>MDAELAEVRALQAEI</original>
    <variation>MEAPSWSVLQRSGDE</variation>
    <location>
        <begin position="1"/>
        <end position="15"/>
    </location>
</feature>
<feature type="splice variant" id="VSP_055369" description="In isoform 2." evidence="4">
    <location>
        <begin position="16"/>
        <end position="188"/>
    </location>
</feature>
<feature type="helix" evidence="7">
    <location>
        <begin position="54"/>
        <end position="74"/>
    </location>
</feature>
<feature type="strand" evidence="7">
    <location>
        <begin position="77"/>
        <end position="87"/>
    </location>
</feature>
<feature type="helix" evidence="8">
    <location>
        <begin position="91"/>
        <end position="93"/>
    </location>
</feature>
<feature type="turn" evidence="8">
    <location>
        <begin position="94"/>
        <end position="96"/>
    </location>
</feature>
<feature type="strand" evidence="7">
    <location>
        <begin position="99"/>
        <end position="111"/>
    </location>
</feature>
<feature type="strand" evidence="7">
    <location>
        <begin position="114"/>
        <end position="126"/>
    </location>
</feature>
<feature type="strand" evidence="7">
    <location>
        <begin position="131"/>
        <end position="142"/>
    </location>
</feature>
<feature type="helix" evidence="7">
    <location>
        <begin position="148"/>
        <end position="160"/>
    </location>
</feature>
<feature type="helix" evidence="7">
    <location>
        <begin position="164"/>
        <end position="190"/>
    </location>
</feature>
<feature type="turn" evidence="7">
    <location>
        <begin position="192"/>
        <end position="194"/>
    </location>
</feature>
<feature type="strand" evidence="8">
    <location>
        <begin position="200"/>
        <end position="202"/>
    </location>
</feature>
<feature type="strand" evidence="7">
    <location>
        <begin position="203"/>
        <end position="209"/>
    </location>
</feature>
<feature type="strand" evidence="7">
    <location>
        <begin position="214"/>
        <end position="226"/>
    </location>
</feature>
<feature type="strand" evidence="7">
    <location>
        <begin position="228"/>
        <end position="230"/>
    </location>
</feature>
<feature type="strand" evidence="7">
    <location>
        <begin position="232"/>
        <end position="241"/>
    </location>
</feature>
<feature type="helix" evidence="7">
    <location>
        <begin position="244"/>
        <end position="249"/>
    </location>
</feature>
<feature type="turn" evidence="8">
    <location>
        <begin position="253"/>
        <end position="257"/>
    </location>
</feature>
<feature type="helix" evidence="7">
    <location>
        <begin position="258"/>
        <end position="266"/>
    </location>
</feature>
<feature type="helix" evidence="7">
    <location>
        <begin position="272"/>
        <end position="282"/>
    </location>
</feature>
<feature type="turn" evidence="8">
    <location>
        <begin position="283"/>
        <end position="287"/>
    </location>
</feature>
<evidence type="ECO:0000255" key="1"/>
<evidence type="ECO:0000269" key="2">
    <source>
    </source>
</evidence>
<evidence type="ECO:0000269" key="3">
    <source>
    </source>
</evidence>
<evidence type="ECO:0000303" key="4">
    <source>
    </source>
</evidence>
<evidence type="ECO:0000305" key="5"/>
<evidence type="ECO:0007744" key="6">
    <source>
    </source>
</evidence>
<evidence type="ECO:0007829" key="7">
    <source>
        <dbReference type="PDB" id="7R5S"/>
    </source>
</evidence>
<evidence type="ECO:0007829" key="8">
    <source>
        <dbReference type="PDB" id="7XHO"/>
    </source>
</evidence>
<organism>
    <name type="scientific">Homo sapiens</name>
    <name type="common">Human</name>
    <dbReference type="NCBI Taxonomy" id="9606"/>
    <lineage>
        <taxon>Eukaryota</taxon>
        <taxon>Metazoa</taxon>
        <taxon>Chordata</taxon>
        <taxon>Craniata</taxon>
        <taxon>Vertebrata</taxon>
        <taxon>Euteleostomi</taxon>
        <taxon>Mammalia</taxon>
        <taxon>Eutheria</taxon>
        <taxon>Euarchontoglires</taxon>
        <taxon>Primates</taxon>
        <taxon>Haplorrhini</taxon>
        <taxon>Catarrhini</taxon>
        <taxon>Hominidae</taxon>
        <taxon>Homo</taxon>
    </lineage>
</organism>
<accession>Q6IPU0</accession>
<accession>B3KRA5</accession>
<accession>B3KS17</accession>
<accession>Q5T9F8</accession>
<accession>Q5T9F9</accession>
<sequence length="288" mass="33165">MDAELAEVRALQAEIAALRRACEDPPAPWEEKSRVQKSFQAIHQFNLEGWKSSKDLKNQLGHLESELSFLSTLTGINIRNHSKQTEDLTSTEMTEKSIRKVLQRHRLSGNCHMVTFQLEFQILEIQNKERLSSAVTDLNIIMEPTECSELSEFVSRAEERKDLFMFFRSLHFFVEWFEYRKRTFKHLKEKYPDAVYLSEGPSSCSMGIRSASRPGFELVIVWRIQIDEDGKVFPKLDLLTKVPQRALELDKNRAIETAPLSFRTLVGLLGIEAALESLIKSLCAEENN</sequence>
<gene>
    <name type="primary">CENPP</name>
</gene>
<proteinExistence type="evidence at protein level"/>
<protein>
    <recommendedName>
        <fullName>Centromere protein P</fullName>
        <shortName>CENP-P</shortName>
    </recommendedName>
</protein>
<keyword id="KW-0002">3D-structure</keyword>
<keyword id="KW-0025">Alternative splicing</keyword>
<keyword id="KW-0137">Centromere</keyword>
<keyword id="KW-0158">Chromosome</keyword>
<keyword id="KW-0175">Coiled coil</keyword>
<keyword id="KW-0539">Nucleus</keyword>
<keyword id="KW-0597">Phosphoprotein</keyword>
<keyword id="KW-1267">Proteomics identification</keyword>
<keyword id="KW-1185">Reference proteome</keyword>
<reference key="1">
    <citation type="journal article" date="2004" name="Nat. Genet.">
        <title>Complete sequencing and characterization of 21,243 full-length human cDNAs.</title>
        <authorList>
            <person name="Ota T."/>
            <person name="Suzuki Y."/>
            <person name="Nishikawa T."/>
            <person name="Otsuki T."/>
            <person name="Sugiyama T."/>
            <person name="Irie R."/>
            <person name="Wakamatsu A."/>
            <person name="Hayashi K."/>
            <person name="Sato H."/>
            <person name="Nagai K."/>
            <person name="Kimura K."/>
            <person name="Makita H."/>
            <person name="Sekine M."/>
            <person name="Obayashi M."/>
            <person name="Nishi T."/>
            <person name="Shibahara T."/>
            <person name="Tanaka T."/>
            <person name="Ishii S."/>
            <person name="Yamamoto J."/>
            <person name="Saito K."/>
            <person name="Kawai Y."/>
            <person name="Isono Y."/>
            <person name="Nakamura Y."/>
            <person name="Nagahari K."/>
            <person name="Murakami K."/>
            <person name="Yasuda T."/>
            <person name="Iwayanagi T."/>
            <person name="Wagatsuma M."/>
            <person name="Shiratori A."/>
            <person name="Sudo H."/>
            <person name="Hosoiri T."/>
            <person name="Kaku Y."/>
            <person name="Kodaira H."/>
            <person name="Kondo H."/>
            <person name="Sugawara M."/>
            <person name="Takahashi M."/>
            <person name="Kanda K."/>
            <person name="Yokoi T."/>
            <person name="Furuya T."/>
            <person name="Kikkawa E."/>
            <person name="Omura Y."/>
            <person name="Abe K."/>
            <person name="Kamihara K."/>
            <person name="Katsuta N."/>
            <person name="Sato K."/>
            <person name="Tanikawa M."/>
            <person name="Yamazaki M."/>
            <person name="Ninomiya K."/>
            <person name="Ishibashi T."/>
            <person name="Yamashita H."/>
            <person name="Murakawa K."/>
            <person name="Fujimori K."/>
            <person name="Tanai H."/>
            <person name="Kimata M."/>
            <person name="Watanabe M."/>
            <person name="Hiraoka S."/>
            <person name="Chiba Y."/>
            <person name="Ishida S."/>
            <person name="Ono Y."/>
            <person name="Takiguchi S."/>
            <person name="Watanabe S."/>
            <person name="Yosida M."/>
            <person name="Hotuta T."/>
            <person name="Kusano J."/>
            <person name="Kanehori K."/>
            <person name="Takahashi-Fujii A."/>
            <person name="Hara H."/>
            <person name="Tanase T.-O."/>
            <person name="Nomura Y."/>
            <person name="Togiya S."/>
            <person name="Komai F."/>
            <person name="Hara R."/>
            <person name="Takeuchi K."/>
            <person name="Arita M."/>
            <person name="Imose N."/>
            <person name="Musashino K."/>
            <person name="Yuuki H."/>
            <person name="Oshima A."/>
            <person name="Sasaki N."/>
            <person name="Aotsuka S."/>
            <person name="Yoshikawa Y."/>
            <person name="Matsunawa H."/>
            <person name="Ichihara T."/>
            <person name="Shiohata N."/>
            <person name="Sano S."/>
            <person name="Moriya S."/>
            <person name="Momiyama H."/>
            <person name="Satoh N."/>
            <person name="Takami S."/>
            <person name="Terashima Y."/>
            <person name="Suzuki O."/>
            <person name="Nakagawa S."/>
            <person name="Senoh A."/>
            <person name="Mizoguchi H."/>
            <person name="Goto Y."/>
            <person name="Shimizu F."/>
            <person name="Wakebe H."/>
            <person name="Hishigaki H."/>
            <person name="Watanabe T."/>
            <person name="Sugiyama A."/>
            <person name="Takemoto M."/>
            <person name="Kawakami B."/>
            <person name="Yamazaki M."/>
            <person name="Watanabe K."/>
            <person name="Kumagai A."/>
            <person name="Itakura S."/>
            <person name="Fukuzumi Y."/>
            <person name="Fujimori Y."/>
            <person name="Komiyama M."/>
            <person name="Tashiro H."/>
            <person name="Tanigami A."/>
            <person name="Fujiwara T."/>
            <person name="Ono T."/>
            <person name="Yamada K."/>
            <person name="Fujii Y."/>
            <person name="Ozaki K."/>
            <person name="Hirao M."/>
            <person name="Ohmori Y."/>
            <person name="Kawabata A."/>
            <person name="Hikiji T."/>
            <person name="Kobatake N."/>
            <person name="Inagaki H."/>
            <person name="Ikema Y."/>
            <person name="Okamoto S."/>
            <person name="Okitani R."/>
            <person name="Kawakami T."/>
            <person name="Noguchi S."/>
            <person name="Itoh T."/>
            <person name="Shigeta K."/>
            <person name="Senba T."/>
            <person name="Matsumura K."/>
            <person name="Nakajima Y."/>
            <person name="Mizuno T."/>
            <person name="Morinaga M."/>
            <person name="Sasaki M."/>
            <person name="Togashi T."/>
            <person name="Oyama M."/>
            <person name="Hata H."/>
            <person name="Watanabe M."/>
            <person name="Komatsu T."/>
            <person name="Mizushima-Sugano J."/>
            <person name="Satoh T."/>
            <person name="Shirai Y."/>
            <person name="Takahashi Y."/>
            <person name="Nakagawa K."/>
            <person name="Okumura K."/>
            <person name="Nagase T."/>
            <person name="Nomura N."/>
            <person name="Kikuchi H."/>
            <person name="Masuho Y."/>
            <person name="Yamashita R."/>
            <person name="Nakai K."/>
            <person name="Yada T."/>
            <person name="Nakamura Y."/>
            <person name="Ohara O."/>
            <person name="Isogai T."/>
            <person name="Sugano S."/>
        </authorList>
    </citation>
    <scope>NUCLEOTIDE SEQUENCE [LARGE SCALE MRNA] (ISOFORMS 1 AND 2)</scope>
    <source>
        <tissue>Prostate</tissue>
        <tissue>Tongue</tissue>
    </source>
</reference>
<reference key="2">
    <citation type="journal article" date="2004" name="Nature">
        <title>DNA sequence and analysis of human chromosome 9.</title>
        <authorList>
            <person name="Humphray S.J."/>
            <person name="Oliver K."/>
            <person name="Hunt A.R."/>
            <person name="Plumb R.W."/>
            <person name="Loveland J.E."/>
            <person name="Howe K.L."/>
            <person name="Andrews T.D."/>
            <person name="Searle S."/>
            <person name="Hunt S.E."/>
            <person name="Scott C.E."/>
            <person name="Jones M.C."/>
            <person name="Ainscough R."/>
            <person name="Almeida J.P."/>
            <person name="Ambrose K.D."/>
            <person name="Ashwell R.I.S."/>
            <person name="Babbage A.K."/>
            <person name="Babbage S."/>
            <person name="Bagguley C.L."/>
            <person name="Bailey J."/>
            <person name="Banerjee R."/>
            <person name="Barker D.J."/>
            <person name="Barlow K.F."/>
            <person name="Bates K."/>
            <person name="Beasley H."/>
            <person name="Beasley O."/>
            <person name="Bird C.P."/>
            <person name="Bray-Allen S."/>
            <person name="Brown A.J."/>
            <person name="Brown J.Y."/>
            <person name="Burford D."/>
            <person name="Burrill W."/>
            <person name="Burton J."/>
            <person name="Carder C."/>
            <person name="Carter N.P."/>
            <person name="Chapman J.C."/>
            <person name="Chen Y."/>
            <person name="Clarke G."/>
            <person name="Clark S.Y."/>
            <person name="Clee C.M."/>
            <person name="Clegg S."/>
            <person name="Collier R.E."/>
            <person name="Corby N."/>
            <person name="Crosier M."/>
            <person name="Cummings A.T."/>
            <person name="Davies J."/>
            <person name="Dhami P."/>
            <person name="Dunn M."/>
            <person name="Dutta I."/>
            <person name="Dyer L.W."/>
            <person name="Earthrowl M.E."/>
            <person name="Faulkner L."/>
            <person name="Fleming C.J."/>
            <person name="Frankish A."/>
            <person name="Frankland J.A."/>
            <person name="French L."/>
            <person name="Fricker D.G."/>
            <person name="Garner P."/>
            <person name="Garnett J."/>
            <person name="Ghori J."/>
            <person name="Gilbert J.G.R."/>
            <person name="Glison C."/>
            <person name="Grafham D.V."/>
            <person name="Gribble S."/>
            <person name="Griffiths C."/>
            <person name="Griffiths-Jones S."/>
            <person name="Grocock R."/>
            <person name="Guy J."/>
            <person name="Hall R.E."/>
            <person name="Hammond S."/>
            <person name="Harley J.L."/>
            <person name="Harrison E.S.I."/>
            <person name="Hart E.A."/>
            <person name="Heath P.D."/>
            <person name="Henderson C.D."/>
            <person name="Hopkins B.L."/>
            <person name="Howard P.J."/>
            <person name="Howden P.J."/>
            <person name="Huckle E."/>
            <person name="Johnson C."/>
            <person name="Johnson D."/>
            <person name="Joy A.A."/>
            <person name="Kay M."/>
            <person name="Keenan S."/>
            <person name="Kershaw J.K."/>
            <person name="Kimberley A.M."/>
            <person name="King A."/>
            <person name="Knights A."/>
            <person name="Laird G.K."/>
            <person name="Langford C."/>
            <person name="Lawlor S."/>
            <person name="Leongamornlert D.A."/>
            <person name="Leversha M."/>
            <person name="Lloyd C."/>
            <person name="Lloyd D.M."/>
            <person name="Lovell J."/>
            <person name="Martin S."/>
            <person name="Mashreghi-Mohammadi M."/>
            <person name="Matthews L."/>
            <person name="McLaren S."/>
            <person name="McLay K.E."/>
            <person name="McMurray A."/>
            <person name="Milne S."/>
            <person name="Nickerson T."/>
            <person name="Nisbett J."/>
            <person name="Nordsiek G."/>
            <person name="Pearce A.V."/>
            <person name="Peck A.I."/>
            <person name="Porter K.M."/>
            <person name="Pandian R."/>
            <person name="Pelan S."/>
            <person name="Phillimore B."/>
            <person name="Povey S."/>
            <person name="Ramsey Y."/>
            <person name="Rand V."/>
            <person name="Scharfe M."/>
            <person name="Sehra H.K."/>
            <person name="Shownkeen R."/>
            <person name="Sims S.K."/>
            <person name="Skuce C.D."/>
            <person name="Smith M."/>
            <person name="Steward C.A."/>
            <person name="Swarbreck D."/>
            <person name="Sycamore N."/>
            <person name="Tester J."/>
            <person name="Thorpe A."/>
            <person name="Tracey A."/>
            <person name="Tromans A."/>
            <person name="Thomas D.W."/>
            <person name="Wall M."/>
            <person name="Wallis J.M."/>
            <person name="West A.P."/>
            <person name="Whitehead S.L."/>
            <person name="Willey D.L."/>
            <person name="Williams S.A."/>
            <person name="Wilming L."/>
            <person name="Wray P.W."/>
            <person name="Young L."/>
            <person name="Ashurst J.L."/>
            <person name="Coulson A."/>
            <person name="Blocker H."/>
            <person name="Durbin R.M."/>
            <person name="Sulston J.E."/>
            <person name="Hubbard T."/>
            <person name="Jackson M.J."/>
            <person name="Bentley D.R."/>
            <person name="Beck S."/>
            <person name="Rogers J."/>
            <person name="Dunham I."/>
        </authorList>
    </citation>
    <scope>NUCLEOTIDE SEQUENCE [LARGE SCALE GENOMIC DNA]</scope>
</reference>
<reference key="3">
    <citation type="journal article" date="2004" name="Genome Res.">
        <title>The status, quality, and expansion of the NIH full-length cDNA project: the Mammalian Gene Collection (MGC).</title>
        <authorList>
            <consortium name="The MGC Project Team"/>
        </authorList>
    </citation>
    <scope>NUCLEOTIDE SEQUENCE [LARGE SCALE MRNA] (ISOFORM 1)</scope>
    <source>
        <tissue>Lymph</tissue>
    </source>
</reference>
<reference key="4">
    <citation type="journal article" date="2006" name="Nat. Cell Biol.">
        <title>The CENP-H-I complex is required for the efficient incorporation of newly synthesized CENP-A into centromeres.</title>
        <authorList>
            <person name="Okada M."/>
            <person name="Cheeseman I.M."/>
            <person name="Hori T."/>
            <person name="Okawa K."/>
            <person name="McLeod I.X."/>
            <person name="Yates J.R. III"/>
            <person name="Desai A."/>
            <person name="Fukagawa T."/>
        </authorList>
    </citation>
    <scope>IDENTIFICATION BY MASS SPECTROMETRY</scope>
    <scope>IDENTIFICATION IN A COMPLEX WITH CENPH; CENPI; CENPK; CENPN; CENPO; CENPQ; CENPR AND CENPU</scope>
    <scope>FUNCTION</scope>
    <scope>SUBCELLULAR LOCATION</scope>
</reference>
<reference key="5">
    <citation type="journal article" date="2006" name="Nat. Cell Biol.">
        <title>The human CENP-A centromeric nucleosome-associated complex.</title>
        <authorList>
            <person name="Foltz D.R."/>
            <person name="Jansen L.E.T."/>
            <person name="Black B.E."/>
            <person name="Bailey A.O."/>
            <person name="Yates J.R. III"/>
            <person name="Cleveland D.W."/>
        </authorList>
    </citation>
    <scope>IDENTIFICATION BY MASS SPECTROMETRY</scope>
    <scope>IDENTIFICATION IN THE CENPA-CAD COMPLEX WITH CENPI; CENPK; CENPL; CENPO; CENPQ; CENPR AND CENPS</scope>
</reference>
<reference key="6">
    <citation type="journal article" date="2013" name="J. Proteome Res.">
        <title>Toward a comprehensive characterization of a human cancer cell phosphoproteome.</title>
        <authorList>
            <person name="Zhou H."/>
            <person name="Di Palma S."/>
            <person name="Preisinger C."/>
            <person name="Peng M."/>
            <person name="Polat A.N."/>
            <person name="Heck A.J."/>
            <person name="Mohammed S."/>
        </authorList>
    </citation>
    <scope>PHOSPHORYLATION [LARGE SCALE ANALYSIS] AT SER-38</scope>
    <scope>IDENTIFICATION BY MASS SPECTROMETRY [LARGE SCALE ANALYSIS]</scope>
    <source>
        <tissue>Erythroleukemia</tissue>
    </source>
</reference>
<dbReference type="EMBL" id="AK091247">
    <property type="protein sequence ID" value="BAG52317.1"/>
    <property type="molecule type" value="mRNA"/>
</dbReference>
<dbReference type="EMBL" id="AK092603">
    <property type="protein sequence ID" value="BAG52579.1"/>
    <property type="molecule type" value="mRNA"/>
</dbReference>
<dbReference type="EMBL" id="AL136097">
    <property type="status" value="NOT_ANNOTATED_CDS"/>
    <property type="molecule type" value="Genomic_DNA"/>
</dbReference>
<dbReference type="EMBL" id="AL137848">
    <property type="status" value="NOT_ANNOTATED_CDS"/>
    <property type="molecule type" value="Genomic_DNA"/>
</dbReference>
<dbReference type="EMBL" id="AL157827">
    <property type="status" value="NOT_ANNOTATED_CDS"/>
    <property type="molecule type" value="Genomic_DNA"/>
</dbReference>
<dbReference type="EMBL" id="BC071726">
    <property type="protein sequence ID" value="AAH71726.1"/>
    <property type="molecule type" value="mRNA"/>
</dbReference>
<dbReference type="CCDS" id="CCDS35063.1">
    <molecule id="Q6IPU0-1"/>
</dbReference>
<dbReference type="CCDS" id="CCDS69618.1">
    <molecule id="Q6IPU0-2"/>
</dbReference>
<dbReference type="RefSeq" id="NP_001012267.1">
    <molecule id="Q6IPU0-1"/>
    <property type="nucleotide sequence ID" value="NM_001012267.3"/>
</dbReference>
<dbReference type="RefSeq" id="NP_001273900.1">
    <molecule id="Q6IPU0-2"/>
    <property type="nucleotide sequence ID" value="NM_001286971.1"/>
</dbReference>
<dbReference type="PDB" id="7PB8">
    <property type="method" value="X-ray"/>
    <property type="resolution" value="3.68 A"/>
    <property type="chains" value="P=1-288"/>
</dbReference>
<dbReference type="PDB" id="7PKN">
    <property type="method" value="EM"/>
    <property type="resolution" value="3.20 A"/>
    <property type="chains" value="P=1-288"/>
</dbReference>
<dbReference type="PDB" id="7QOO">
    <property type="method" value="EM"/>
    <property type="resolution" value="4.60 A"/>
    <property type="chains" value="P=1-288"/>
</dbReference>
<dbReference type="PDB" id="7R5S">
    <property type="method" value="EM"/>
    <property type="resolution" value="2.83 A"/>
    <property type="chains" value="P=1-288"/>
</dbReference>
<dbReference type="PDB" id="7R5V">
    <property type="method" value="EM"/>
    <property type="resolution" value="4.55 A"/>
    <property type="chains" value="P=1-288"/>
</dbReference>
<dbReference type="PDB" id="7XHN">
    <property type="method" value="EM"/>
    <property type="resolution" value="3.71 A"/>
    <property type="chains" value="P=1-288"/>
</dbReference>
<dbReference type="PDB" id="7XHO">
    <property type="method" value="EM"/>
    <property type="resolution" value="3.29 A"/>
    <property type="chains" value="P=1-288"/>
</dbReference>
<dbReference type="PDB" id="7YWX">
    <property type="method" value="EM"/>
    <property type="resolution" value="12.00 A"/>
    <property type="chains" value="P=1-288"/>
</dbReference>
<dbReference type="PDB" id="7YYH">
    <property type="method" value="EM"/>
    <property type="resolution" value="8.90 A"/>
    <property type="chains" value="P=1-288"/>
</dbReference>
<dbReference type="PDBsum" id="7PB8"/>
<dbReference type="PDBsum" id="7PKN"/>
<dbReference type="PDBsum" id="7QOO"/>
<dbReference type="PDBsum" id="7R5S"/>
<dbReference type="PDBsum" id="7R5V"/>
<dbReference type="PDBsum" id="7XHN"/>
<dbReference type="PDBsum" id="7XHO"/>
<dbReference type="PDBsum" id="7YWX"/>
<dbReference type="PDBsum" id="7YYH"/>
<dbReference type="EMDB" id="EMD-13473"/>
<dbReference type="EMDB" id="EMD-14098"/>
<dbReference type="EMDB" id="EMD-14336"/>
<dbReference type="EMDB" id="EMD-14341"/>
<dbReference type="EMDB" id="EMD-14351"/>
<dbReference type="EMDB" id="EMD-14375"/>
<dbReference type="EMDB" id="EMD-33196"/>
<dbReference type="EMDB" id="EMD-33197"/>
<dbReference type="SMR" id="Q6IPU0"/>
<dbReference type="BioGRID" id="135138">
    <property type="interactions" value="54"/>
</dbReference>
<dbReference type="ComplexPortal" id="CPX-5646">
    <property type="entry name" value="Kinetochore CCAN complex"/>
</dbReference>
<dbReference type="CORUM" id="Q6IPU0"/>
<dbReference type="FunCoup" id="Q6IPU0">
    <property type="interactions" value="2178"/>
</dbReference>
<dbReference type="IntAct" id="Q6IPU0">
    <property type="interactions" value="35"/>
</dbReference>
<dbReference type="MINT" id="Q6IPU0"/>
<dbReference type="STRING" id="9606.ENSP00000364737"/>
<dbReference type="iPTMnet" id="Q6IPU0"/>
<dbReference type="MetOSite" id="Q6IPU0"/>
<dbReference type="PhosphoSitePlus" id="Q6IPU0"/>
<dbReference type="BioMuta" id="CENPP"/>
<dbReference type="DMDM" id="74748817"/>
<dbReference type="jPOST" id="Q6IPU0"/>
<dbReference type="MassIVE" id="Q6IPU0"/>
<dbReference type="PaxDb" id="9606-ENSP00000364737"/>
<dbReference type="PeptideAtlas" id="Q6IPU0"/>
<dbReference type="ProteomicsDB" id="3591"/>
<dbReference type="ProteomicsDB" id="66462">
    <molecule id="Q6IPU0-1"/>
</dbReference>
<dbReference type="Pumba" id="Q6IPU0"/>
<dbReference type="Antibodypedia" id="13721">
    <property type="antibodies" value="139 antibodies from 28 providers"/>
</dbReference>
<dbReference type="DNASU" id="401541"/>
<dbReference type="Ensembl" id="ENST00000375579.7">
    <molecule id="Q6IPU0-2"/>
    <property type="protein sequence ID" value="ENSP00000364729.3"/>
    <property type="gene ID" value="ENSG00000188312.15"/>
</dbReference>
<dbReference type="Ensembl" id="ENST00000375587.8">
    <molecule id="Q6IPU0-1"/>
    <property type="protein sequence ID" value="ENSP00000364737.3"/>
    <property type="gene ID" value="ENSG00000188312.15"/>
</dbReference>
<dbReference type="Ensembl" id="ENST00000707232.1">
    <molecule id="Q6IPU0-1"/>
    <property type="protein sequence ID" value="ENSP00000516797.1"/>
    <property type="gene ID" value="ENSG00000291348.1"/>
</dbReference>
<dbReference type="Ensembl" id="ENST00000707234.1">
    <molecule id="Q6IPU0-2"/>
    <property type="protein sequence ID" value="ENSP00000516799.1"/>
    <property type="gene ID" value="ENSG00000291348.1"/>
</dbReference>
<dbReference type="GeneID" id="401541"/>
<dbReference type="KEGG" id="hsa:401541"/>
<dbReference type="MANE-Select" id="ENST00000375587.8">
    <property type="protein sequence ID" value="ENSP00000364737.3"/>
    <property type="RefSeq nucleotide sequence ID" value="NM_001012267.3"/>
    <property type="RefSeq protein sequence ID" value="NP_001012267.1"/>
</dbReference>
<dbReference type="UCSC" id="uc004arz.5">
    <molecule id="Q6IPU0-1"/>
    <property type="organism name" value="human"/>
</dbReference>
<dbReference type="AGR" id="HGNC:32933"/>
<dbReference type="CTD" id="401541"/>
<dbReference type="DisGeNET" id="401541"/>
<dbReference type="GeneCards" id="CENPP"/>
<dbReference type="HGNC" id="HGNC:32933">
    <property type="gene designation" value="CENPP"/>
</dbReference>
<dbReference type="HPA" id="ENSG00000188312">
    <property type="expression patterns" value="Tissue enhanced (skin)"/>
</dbReference>
<dbReference type="MalaCards" id="CENPP"/>
<dbReference type="MIM" id="611505">
    <property type="type" value="gene"/>
</dbReference>
<dbReference type="neXtProt" id="NX_Q6IPU0"/>
<dbReference type="OpenTargets" id="ENSG00000188312"/>
<dbReference type="Orphanet" id="90635">
    <property type="disease" value="Rare autosomal dominant non-syndromic sensorineural deafness type DFNA"/>
</dbReference>
<dbReference type="PharmGKB" id="PA145149143"/>
<dbReference type="VEuPathDB" id="HostDB:ENSG00000188312"/>
<dbReference type="eggNOG" id="ENOG502S17P">
    <property type="taxonomic scope" value="Eukaryota"/>
</dbReference>
<dbReference type="GeneTree" id="ENSGT00390000011897"/>
<dbReference type="HOGENOM" id="CLU_084497_0_0_1"/>
<dbReference type="InParanoid" id="Q6IPU0"/>
<dbReference type="OMA" id="TYAEWYE"/>
<dbReference type="OrthoDB" id="5976950at2759"/>
<dbReference type="PAN-GO" id="Q6IPU0">
    <property type="GO annotations" value="1 GO annotation based on evolutionary models"/>
</dbReference>
<dbReference type="PhylomeDB" id="Q6IPU0"/>
<dbReference type="TreeFam" id="TF333784"/>
<dbReference type="PathwayCommons" id="Q6IPU0"/>
<dbReference type="Reactome" id="R-HSA-141444">
    <property type="pathway name" value="Amplification of signal from unattached kinetochores via a MAD2 inhibitory signal"/>
</dbReference>
<dbReference type="Reactome" id="R-HSA-2467813">
    <property type="pathway name" value="Separation of Sister Chromatids"/>
</dbReference>
<dbReference type="Reactome" id="R-HSA-2500257">
    <property type="pathway name" value="Resolution of Sister Chromatid Cohesion"/>
</dbReference>
<dbReference type="Reactome" id="R-HSA-5663220">
    <property type="pathway name" value="RHO GTPases Activate Formins"/>
</dbReference>
<dbReference type="Reactome" id="R-HSA-606279">
    <property type="pathway name" value="Deposition of new CENPA-containing nucleosomes at the centromere"/>
</dbReference>
<dbReference type="Reactome" id="R-HSA-68877">
    <property type="pathway name" value="Mitotic Prometaphase"/>
</dbReference>
<dbReference type="Reactome" id="R-HSA-9648025">
    <property type="pathway name" value="EML4 and NUDC in mitotic spindle formation"/>
</dbReference>
<dbReference type="SignaLink" id="Q6IPU0"/>
<dbReference type="SIGNOR" id="Q6IPU0"/>
<dbReference type="BioGRID-ORCS" id="401541">
    <property type="hits" value="228 hits in 1164 CRISPR screens"/>
</dbReference>
<dbReference type="ChiTaRS" id="CENPP">
    <property type="organism name" value="human"/>
</dbReference>
<dbReference type="GenomeRNAi" id="401541"/>
<dbReference type="Pharos" id="Q6IPU0">
    <property type="development level" value="Tbio"/>
</dbReference>
<dbReference type="PRO" id="PR:Q6IPU0"/>
<dbReference type="Proteomes" id="UP000005640">
    <property type="component" value="Chromosome 9"/>
</dbReference>
<dbReference type="RNAct" id="Q6IPU0">
    <property type="molecule type" value="protein"/>
</dbReference>
<dbReference type="Bgee" id="ENSG00000188312">
    <property type="expression patterns" value="Expressed in calcaneal tendon and 99 other cell types or tissues"/>
</dbReference>
<dbReference type="ExpressionAtlas" id="Q6IPU0">
    <property type="expression patterns" value="baseline and differential"/>
</dbReference>
<dbReference type="GO" id="GO:0005829">
    <property type="term" value="C:cytosol"/>
    <property type="evidence" value="ECO:0000304"/>
    <property type="project" value="Reactome"/>
</dbReference>
<dbReference type="GO" id="GO:0000939">
    <property type="term" value="C:inner kinetochore"/>
    <property type="evidence" value="ECO:0000353"/>
    <property type="project" value="ComplexPortal"/>
</dbReference>
<dbReference type="GO" id="GO:0005730">
    <property type="term" value="C:nucleolus"/>
    <property type="evidence" value="ECO:0000314"/>
    <property type="project" value="HPA"/>
</dbReference>
<dbReference type="GO" id="GO:0005654">
    <property type="term" value="C:nucleoplasm"/>
    <property type="evidence" value="ECO:0000314"/>
    <property type="project" value="HPA"/>
</dbReference>
<dbReference type="GO" id="GO:0005634">
    <property type="term" value="C:nucleus"/>
    <property type="evidence" value="ECO:0000318"/>
    <property type="project" value="GO_Central"/>
</dbReference>
<dbReference type="GO" id="GO:0034080">
    <property type="term" value="P:CENP-A containing chromatin assembly"/>
    <property type="evidence" value="ECO:0007669"/>
    <property type="project" value="InterPro"/>
</dbReference>
<dbReference type="GO" id="GO:0007059">
    <property type="term" value="P:chromosome segregation"/>
    <property type="evidence" value="ECO:0000303"/>
    <property type="project" value="ComplexPortal"/>
</dbReference>
<dbReference type="InterPro" id="IPR027801">
    <property type="entry name" value="CENP-P"/>
</dbReference>
<dbReference type="PANTHER" id="PTHR28577">
    <property type="entry name" value="CENTROMERE PROTEIN P"/>
    <property type="match status" value="1"/>
</dbReference>
<dbReference type="PANTHER" id="PTHR28577:SF1">
    <property type="entry name" value="CENTROMERE PROTEIN P"/>
    <property type="match status" value="1"/>
</dbReference>
<dbReference type="Pfam" id="PF13096">
    <property type="entry name" value="CENP-P"/>
    <property type="match status" value="1"/>
</dbReference>